<proteinExistence type="inferred from homology"/>
<accession>Q5M1K7</accession>
<gene>
    <name evidence="1" type="primary">recU</name>
    <name type="ordered locus">str0231</name>
</gene>
<dbReference type="EC" id="3.1.21.10" evidence="1"/>
<dbReference type="EMBL" id="CP000024">
    <property type="protein sequence ID" value="AAV61845.1"/>
    <property type="molecule type" value="Genomic_DNA"/>
</dbReference>
<dbReference type="RefSeq" id="WP_002949408.1">
    <property type="nucleotide sequence ID" value="NC_006449.1"/>
</dbReference>
<dbReference type="SMR" id="Q5M1K7"/>
<dbReference type="GeneID" id="66898162"/>
<dbReference type="KEGG" id="stc:str0231"/>
<dbReference type="HOGENOM" id="CLU_096340_0_0_9"/>
<dbReference type="GO" id="GO:0005737">
    <property type="term" value="C:cytoplasm"/>
    <property type="evidence" value="ECO:0007669"/>
    <property type="project" value="UniProtKB-SubCell"/>
</dbReference>
<dbReference type="GO" id="GO:0004519">
    <property type="term" value="F:endonuclease activity"/>
    <property type="evidence" value="ECO:0007669"/>
    <property type="project" value="UniProtKB-UniRule"/>
</dbReference>
<dbReference type="GO" id="GO:0000287">
    <property type="term" value="F:magnesium ion binding"/>
    <property type="evidence" value="ECO:0007669"/>
    <property type="project" value="UniProtKB-UniRule"/>
</dbReference>
<dbReference type="GO" id="GO:0003676">
    <property type="term" value="F:nucleic acid binding"/>
    <property type="evidence" value="ECO:0007669"/>
    <property type="project" value="InterPro"/>
</dbReference>
<dbReference type="GO" id="GO:0007059">
    <property type="term" value="P:chromosome segregation"/>
    <property type="evidence" value="ECO:0007669"/>
    <property type="project" value="UniProtKB-UniRule"/>
</dbReference>
<dbReference type="GO" id="GO:0006310">
    <property type="term" value="P:DNA recombination"/>
    <property type="evidence" value="ECO:0007669"/>
    <property type="project" value="UniProtKB-UniRule"/>
</dbReference>
<dbReference type="GO" id="GO:0006281">
    <property type="term" value="P:DNA repair"/>
    <property type="evidence" value="ECO:0007669"/>
    <property type="project" value="UniProtKB-UniRule"/>
</dbReference>
<dbReference type="CDD" id="cd22354">
    <property type="entry name" value="RecU-like"/>
    <property type="match status" value="1"/>
</dbReference>
<dbReference type="Gene3D" id="3.40.1350.10">
    <property type="match status" value="1"/>
</dbReference>
<dbReference type="HAMAP" id="MF_00130">
    <property type="entry name" value="RecU"/>
    <property type="match status" value="1"/>
</dbReference>
<dbReference type="InterPro" id="IPR004612">
    <property type="entry name" value="Resolv_RecU"/>
</dbReference>
<dbReference type="InterPro" id="IPR011335">
    <property type="entry name" value="Restrct_endonuc-II-like"/>
</dbReference>
<dbReference type="InterPro" id="IPR011856">
    <property type="entry name" value="tRNA_endonuc-like_dom_sf"/>
</dbReference>
<dbReference type="NCBIfam" id="NF002580">
    <property type="entry name" value="PRK02234.1-1"/>
    <property type="match status" value="1"/>
</dbReference>
<dbReference type="NCBIfam" id="NF002584">
    <property type="entry name" value="PRK02234.1-5"/>
    <property type="match status" value="1"/>
</dbReference>
<dbReference type="NCBIfam" id="TIGR00648">
    <property type="entry name" value="recU"/>
    <property type="match status" value="1"/>
</dbReference>
<dbReference type="Pfam" id="PF03838">
    <property type="entry name" value="RecU"/>
    <property type="match status" value="1"/>
</dbReference>
<dbReference type="PIRSF" id="PIRSF037785">
    <property type="entry name" value="RecU"/>
    <property type="match status" value="1"/>
</dbReference>
<dbReference type="SUPFAM" id="SSF52980">
    <property type="entry name" value="Restriction endonuclease-like"/>
    <property type="match status" value="1"/>
</dbReference>
<feature type="chain" id="PRO_1000016757" description="Holliday junction resolvase RecU">
    <location>
        <begin position="1"/>
        <end position="198"/>
    </location>
</feature>
<feature type="binding site" evidence="1">
    <location>
        <position position="83"/>
    </location>
    <ligand>
        <name>Mg(2+)</name>
        <dbReference type="ChEBI" id="CHEBI:18420"/>
    </ligand>
</feature>
<feature type="binding site" evidence="1">
    <location>
        <position position="85"/>
    </location>
    <ligand>
        <name>Mg(2+)</name>
        <dbReference type="ChEBI" id="CHEBI:18420"/>
    </ligand>
</feature>
<feature type="binding site" evidence="1">
    <location>
        <position position="98"/>
    </location>
    <ligand>
        <name>Mg(2+)</name>
        <dbReference type="ChEBI" id="CHEBI:18420"/>
    </ligand>
</feature>
<feature type="binding site" evidence="1">
    <location>
        <position position="117"/>
    </location>
    <ligand>
        <name>Mg(2+)</name>
        <dbReference type="ChEBI" id="CHEBI:18420"/>
    </ligand>
</feature>
<feature type="site" description="Transition state stabilizer" evidence="1">
    <location>
        <position position="100"/>
    </location>
</feature>
<sequence length="198" mass="22827">MVNYPHQISRKIAQVRTKKSNRVDFANRGMNFESAINATNDYYLSRGLAVIHKKPTPVQIVKVDYPKRSRAKIVEAYFRQASTTDYSGVYKGYYIDFEAKETRQKTSMPMKNFHAHQIKHMSQVINQDGICFVLLHFSTLKETYLLPAKDLIAFYQIDKGTKSMPLDYIKKRGYAIAESAYPQVPYLEIIEKLLGGNT</sequence>
<keyword id="KW-0963">Cytoplasm</keyword>
<keyword id="KW-0227">DNA damage</keyword>
<keyword id="KW-0233">DNA recombination</keyword>
<keyword id="KW-0234">DNA repair</keyword>
<keyword id="KW-0255">Endonuclease</keyword>
<keyword id="KW-0378">Hydrolase</keyword>
<keyword id="KW-0460">Magnesium</keyword>
<keyword id="KW-0479">Metal-binding</keyword>
<keyword id="KW-0540">Nuclease</keyword>
<organism>
    <name type="scientific">Streptococcus thermophilus (strain CNRZ 1066)</name>
    <dbReference type="NCBI Taxonomy" id="299768"/>
    <lineage>
        <taxon>Bacteria</taxon>
        <taxon>Bacillati</taxon>
        <taxon>Bacillota</taxon>
        <taxon>Bacilli</taxon>
        <taxon>Lactobacillales</taxon>
        <taxon>Streptococcaceae</taxon>
        <taxon>Streptococcus</taxon>
    </lineage>
</organism>
<protein>
    <recommendedName>
        <fullName evidence="1">Holliday junction resolvase RecU</fullName>
        <ecNumber evidence="1">3.1.21.10</ecNumber>
    </recommendedName>
    <alternativeName>
        <fullName evidence="1">Recombination protein U homolog</fullName>
    </alternativeName>
</protein>
<reference key="1">
    <citation type="journal article" date="2004" name="Nat. Biotechnol.">
        <title>Complete sequence and comparative genome analysis of the dairy bacterium Streptococcus thermophilus.</title>
        <authorList>
            <person name="Bolotin A."/>
            <person name="Quinquis B."/>
            <person name="Renault P."/>
            <person name="Sorokin A."/>
            <person name="Ehrlich S.D."/>
            <person name="Kulakauskas S."/>
            <person name="Lapidus A."/>
            <person name="Goltsman E."/>
            <person name="Mazur M."/>
            <person name="Pusch G.D."/>
            <person name="Fonstein M."/>
            <person name="Overbeek R."/>
            <person name="Kyprides N."/>
            <person name="Purnelle B."/>
            <person name="Prozzi D."/>
            <person name="Ngui K."/>
            <person name="Masuy D."/>
            <person name="Hancy F."/>
            <person name="Burteau S."/>
            <person name="Boutry M."/>
            <person name="Delcour J."/>
            <person name="Goffeau A."/>
            <person name="Hols P."/>
        </authorList>
    </citation>
    <scope>NUCLEOTIDE SEQUENCE [LARGE SCALE GENOMIC DNA]</scope>
    <source>
        <strain>CNRZ 1066</strain>
    </source>
</reference>
<evidence type="ECO:0000255" key="1">
    <source>
        <dbReference type="HAMAP-Rule" id="MF_00130"/>
    </source>
</evidence>
<comment type="function">
    <text evidence="1">Endonuclease that resolves Holliday junction intermediates in genetic recombination. Cleaves mobile four-strand junctions by introducing symmetrical nicks in paired strands. Promotes annealing of linear ssDNA with homologous dsDNA. Required for DNA repair, homologous recombination and chromosome segregation.</text>
</comment>
<comment type="catalytic activity">
    <reaction evidence="1">
        <text>Endonucleolytic cleavage at a junction such as a reciprocal single-stranded crossover between two homologous DNA duplexes (Holliday junction).</text>
        <dbReference type="EC" id="3.1.21.10"/>
    </reaction>
</comment>
<comment type="cofactor">
    <cofactor evidence="1">
        <name>Mg(2+)</name>
        <dbReference type="ChEBI" id="CHEBI:18420"/>
    </cofactor>
    <text evidence="1">Binds 1 Mg(2+) ion per subunit.</text>
</comment>
<comment type="subcellular location">
    <subcellularLocation>
        <location evidence="1">Cytoplasm</location>
    </subcellularLocation>
</comment>
<comment type="similarity">
    <text evidence="1">Belongs to the RecU family.</text>
</comment>
<name>RECU_STRT1</name>